<feature type="chain" id="PRO_0000250319" description="Glycerol-3-phosphate acyltransferase">
    <location>
        <begin position="1"/>
        <end position="189"/>
    </location>
</feature>
<feature type="transmembrane region" description="Helical" evidence="1">
    <location>
        <begin position="1"/>
        <end position="21"/>
    </location>
</feature>
<feature type="transmembrane region" description="Helical" evidence="1">
    <location>
        <begin position="51"/>
        <end position="71"/>
    </location>
</feature>
<feature type="transmembrane region" description="Helical" evidence="1">
    <location>
        <begin position="77"/>
        <end position="97"/>
    </location>
</feature>
<feature type="transmembrane region" description="Helical" evidence="1">
    <location>
        <begin position="111"/>
        <end position="131"/>
    </location>
</feature>
<feature type="transmembrane region" description="Helical" evidence="1">
    <location>
        <begin position="151"/>
        <end position="171"/>
    </location>
</feature>
<comment type="function">
    <text evidence="1">Catalyzes the transfer of an acyl group from acyl-phosphate (acyl-PO(4)) to glycerol-3-phosphate (G3P) to form lysophosphatidic acid (LPA). This enzyme utilizes acyl-phosphate as fatty acyl donor, but not acyl-CoA or acyl-ACP.</text>
</comment>
<comment type="catalytic activity">
    <reaction evidence="1">
        <text>an acyl phosphate + sn-glycerol 3-phosphate = a 1-acyl-sn-glycero-3-phosphate + phosphate</text>
        <dbReference type="Rhea" id="RHEA:34075"/>
        <dbReference type="ChEBI" id="CHEBI:43474"/>
        <dbReference type="ChEBI" id="CHEBI:57597"/>
        <dbReference type="ChEBI" id="CHEBI:57970"/>
        <dbReference type="ChEBI" id="CHEBI:59918"/>
        <dbReference type="EC" id="2.3.1.275"/>
    </reaction>
</comment>
<comment type="pathway">
    <text evidence="1">Lipid metabolism; phospholipid metabolism.</text>
</comment>
<comment type="subunit">
    <text evidence="1">Probably interacts with PlsX.</text>
</comment>
<comment type="subcellular location">
    <subcellularLocation>
        <location evidence="1">Cell inner membrane</location>
        <topology evidence="1">Multi-pass membrane protein</topology>
    </subcellularLocation>
</comment>
<comment type="similarity">
    <text evidence="1">Belongs to the PlsY family.</text>
</comment>
<sequence length="189" mass="20342">MFWLLAILAYLLGSLSFAILLSRLTGNPDPRMSGSGNAGATNMLRLAGRKLAILTLLGDLCKGLLPVLIASAMGLSLQDQAWIGVCAVIGHLFPLYFRFRGGKGVATAAGMLLGLYPPAALLAVCAWLLTFYLTRTSSLAALIATPLTLPLLAWQEPAALLPMSTLTLLIVWRHRGNLRDLFAGRERHF</sequence>
<organism>
    <name type="scientific">Pseudomonas fluorescens (strain Pf0-1)</name>
    <dbReference type="NCBI Taxonomy" id="205922"/>
    <lineage>
        <taxon>Bacteria</taxon>
        <taxon>Pseudomonadati</taxon>
        <taxon>Pseudomonadota</taxon>
        <taxon>Gammaproteobacteria</taxon>
        <taxon>Pseudomonadales</taxon>
        <taxon>Pseudomonadaceae</taxon>
        <taxon>Pseudomonas</taxon>
    </lineage>
</organism>
<dbReference type="EC" id="2.3.1.275" evidence="1"/>
<dbReference type="EMBL" id="CP000094">
    <property type="protein sequence ID" value="ABA76882.1"/>
    <property type="molecule type" value="Genomic_DNA"/>
</dbReference>
<dbReference type="RefSeq" id="WP_007959895.1">
    <property type="nucleotide sequence ID" value="NC_007492.2"/>
</dbReference>
<dbReference type="SMR" id="Q3K5S2"/>
<dbReference type="KEGG" id="pfo:Pfl01_5145"/>
<dbReference type="eggNOG" id="COG0344">
    <property type="taxonomic scope" value="Bacteria"/>
</dbReference>
<dbReference type="HOGENOM" id="CLU_081254_0_0_6"/>
<dbReference type="UniPathway" id="UPA00085"/>
<dbReference type="Proteomes" id="UP000002704">
    <property type="component" value="Chromosome"/>
</dbReference>
<dbReference type="GO" id="GO:0005886">
    <property type="term" value="C:plasma membrane"/>
    <property type="evidence" value="ECO:0007669"/>
    <property type="project" value="UniProtKB-SubCell"/>
</dbReference>
<dbReference type="GO" id="GO:0043772">
    <property type="term" value="F:acyl-phosphate glycerol-3-phosphate acyltransferase activity"/>
    <property type="evidence" value="ECO:0007669"/>
    <property type="project" value="UniProtKB-UniRule"/>
</dbReference>
<dbReference type="GO" id="GO:0008654">
    <property type="term" value="P:phospholipid biosynthetic process"/>
    <property type="evidence" value="ECO:0007669"/>
    <property type="project" value="UniProtKB-UniRule"/>
</dbReference>
<dbReference type="HAMAP" id="MF_01043">
    <property type="entry name" value="PlsY"/>
    <property type="match status" value="1"/>
</dbReference>
<dbReference type="InterPro" id="IPR003811">
    <property type="entry name" value="G3P_acylTferase_PlsY"/>
</dbReference>
<dbReference type="NCBIfam" id="TIGR00023">
    <property type="entry name" value="glycerol-3-phosphate 1-O-acyltransferase PlsY"/>
    <property type="match status" value="1"/>
</dbReference>
<dbReference type="PANTHER" id="PTHR30309:SF0">
    <property type="entry name" value="GLYCEROL-3-PHOSPHATE ACYLTRANSFERASE-RELATED"/>
    <property type="match status" value="1"/>
</dbReference>
<dbReference type="PANTHER" id="PTHR30309">
    <property type="entry name" value="INNER MEMBRANE PROTEIN YGIH"/>
    <property type="match status" value="1"/>
</dbReference>
<dbReference type="Pfam" id="PF02660">
    <property type="entry name" value="G3P_acyltransf"/>
    <property type="match status" value="1"/>
</dbReference>
<dbReference type="SMART" id="SM01207">
    <property type="entry name" value="G3P_acyltransf"/>
    <property type="match status" value="1"/>
</dbReference>
<accession>Q3K5S2</accession>
<gene>
    <name evidence="1" type="primary">plsY</name>
    <name type="ordered locus">Pfl01_5145</name>
</gene>
<reference key="1">
    <citation type="journal article" date="2009" name="Genome Biol.">
        <title>Genomic and genetic analyses of diversity and plant interactions of Pseudomonas fluorescens.</title>
        <authorList>
            <person name="Silby M.W."/>
            <person name="Cerdeno-Tarraga A.M."/>
            <person name="Vernikos G.S."/>
            <person name="Giddens S.R."/>
            <person name="Jackson R.W."/>
            <person name="Preston G.M."/>
            <person name="Zhang X.-X."/>
            <person name="Moon C.D."/>
            <person name="Gehrig S.M."/>
            <person name="Godfrey S.A.C."/>
            <person name="Knight C.G."/>
            <person name="Malone J.G."/>
            <person name="Robinson Z."/>
            <person name="Spiers A.J."/>
            <person name="Harris S."/>
            <person name="Challis G.L."/>
            <person name="Yaxley A.M."/>
            <person name="Harris D."/>
            <person name="Seeger K."/>
            <person name="Murphy L."/>
            <person name="Rutter S."/>
            <person name="Squares R."/>
            <person name="Quail M.A."/>
            <person name="Saunders E."/>
            <person name="Mavromatis K."/>
            <person name="Brettin T.S."/>
            <person name="Bentley S.D."/>
            <person name="Hothersall J."/>
            <person name="Stephens E."/>
            <person name="Thomas C.M."/>
            <person name="Parkhill J."/>
            <person name="Levy S.B."/>
            <person name="Rainey P.B."/>
            <person name="Thomson N.R."/>
        </authorList>
    </citation>
    <scope>NUCLEOTIDE SEQUENCE [LARGE SCALE GENOMIC DNA]</scope>
    <source>
        <strain>Pf0-1</strain>
    </source>
</reference>
<protein>
    <recommendedName>
        <fullName evidence="1">Glycerol-3-phosphate acyltransferase</fullName>
    </recommendedName>
    <alternativeName>
        <fullName evidence="1">Acyl-PO4 G3P acyltransferase</fullName>
    </alternativeName>
    <alternativeName>
        <fullName evidence="1">Acyl-phosphate--glycerol-3-phosphate acyltransferase</fullName>
    </alternativeName>
    <alternativeName>
        <fullName evidence="1">G3P acyltransferase</fullName>
        <shortName evidence="1">GPAT</shortName>
        <ecNumber evidence="1">2.3.1.275</ecNumber>
    </alternativeName>
    <alternativeName>
        <fullName evidence="1">Lysophosphatidic acid synthase</fullName>
        <shortName evidence="1">LPA synthase</shortName>
    </alternativeName>
</protein>
<evidence type="ECO:0000255" key="1">
    <source>
        <dbReference type="HAMAP-Rule" id="MF_01043"/>
    </source>
</evidence>
<proteinExistence type="inferred from homology"/>
<name>PLSY_PSEPF</name>
<keyword id="KW-0997">Cell inner membrane</keyword>
<keyword id="KW-1003">Cell membrane</keyword>
<keyword id="KW-0444">Lipid biosynthesis</keyword>
<keyword id="KW-0443">Lipid metabolism</keyword>
<keyword id="KW-0472">Membrane</keyword>
<keyword id="KW-0594">Phospholipid biosynthesis</keyword>
<keyword id="KW-1208">Phospholipid metabolism</keyword>
<keyword id="KW-0808">Transferase</keyword>
<keyword id="KW-0812">Transmembrane</keyword>
<keyword id="KW-1133">Transmembrane helix</keyword>